<proteinExistence type="inferred from homology"/>
<evidence type="ECO:0000255" key="1">
    <source>
        <dbReference type="HAMAP-Rule" id="MF_00218"/>
    </source>
</evidence>
<protein>
    <recommendedName>
        <fullName evidence="1">Uroporphyrinogen decarboxylase</fullName>
        <shortName evidence="1">UPD</shortName>
        <shortName evidence="1">URO-D</shortName>
        <ecNumber evidence="1">4.1.1.37</ecNumber>
    </recommendedName>
</protein>
<reference key="1">
    <citation type="journal article" date="2005" name="Nucleic Acids Res.">
        <title>The genome sequence of Salmonella enterica serovar Choleraesuis, a highly invasive and resistant zoonotic pathogen.</title>
        <authorList>
            <person name="Chiu C.-H."/>
            <person name="Tang P."/>
            <person name="Chu C."/>
            <person name="Hu S."/>
            <person name="Bao Q."/>
            <person name="Yu J."/>
            <person name="Chou Y.-Y."/>
            <person name="Wang H.-S."/>
            <person name="Lee Y.-S."/>
        </authorList>
    </citation>
    <scope>NUCLEOTIDE SEQUENCE [LARGE SCALE GENOMIC DNA]</scope>
    <source>
        <strain>SC-B67</strain>
    </source>
</reference>
<organism>
    <name type="scientific">Salmonella choleraesuis (strain SC-B67)</name>
    <dbReference type="NCBI Taxonomy" id="321314"/>
    <lineage>
        <taxon>Bacteria</taxon>
        <taxon>Pseudomonadati</taxon>
        <taxon>Pseudomonadota</taxon>
        <taxon>Gammaproteobacteria</taxon>
        <taxon>Enterobacterales</taxon>
        <taxon>Enterobacteriaceae</taxon>
        <taxon>Salmonella</taxon>
    </lineage>
</organism>
<gene>
    <name evidence="1" type="primary">hemE</name>
    <name type="ordered locus">SCH_4048</name>
</gene>
<feature type="chain" id="PRO_1000023964" description="Uroporphyrinogen decarboxylase">
    <location>
        <begin position="1"/>
        <end position="354"/>
    </location>
</feature>
<feature type="binding site" evidence="1">
    <location>
        <begin position="27"/>
        <end position="31"/>
    </location>
    <ligand>
        <name>substrate</name>
    </ligand>
</feature>
<feature type="binding site" evidence="1">
    <location>
        <position position="77"/>
    </location>
    <ligand>
        <name>substrate</name>
    </ligand>
</feature>
<feature type="binding site" evidence="1">
    <location>
        <position position="154"/>
    </location>
    <ligand>
        <name>substrate</name>
    </ligand>
</feature>
<feature type="binding site" evidence="1">
    <location>
        <position position="209"/>
    </location>
    <ligand>
        <name>substrate</name>
    </ligand>
</feature>
<feature type="binding site" evidence="1">
    <location>
        <position position="327"/>
    </location>
    <ligand>
        <name>substrate</name>
    </ligand>
</feature>
<feature type="site" description="Transition state stabilizer" evidence="1">
    <location>
        <position position="77"/>
    </location>
</feature>
<accession>Q57H58</accession>
<name>DCUP_SALCH</name>
<dbReference type="EC" id="4.1.1.37" evidence="1"/>
<dbReference type="EMBL" id="AE017220">
    <property type="protein sequence ID" value="AAX67954.1"/>
    <property type="molecule type" value="Genomic_DNA"/>
</dbReference>
<dbReference type="RefSeq" id="WP_000137623.1">
    <property type="nucleotide sequence ID" value="NC_006905.1"/>
</dbReference>
<dbReference type="SMR" id="Q57H58"/>
<dbReference type="KEGG" id="sec:SCH_4048"/>
<dbReference type="HOGENOM" id="CLU_040933_0_0_6"/>
<dbReference type="UniPathway" id="UPA00251">
    <property type="reaction ID" value="UER00321"/>
</dbReference>
<dbReference type="Proteomes" id="UP000000538">
    <property type="component" value="Chromosome"/>
</dbReference>
<dbReference type="GO" id="GO:0005829">
    <property type="term" value="C:cytosol"/>
    <property type="evidence" value="ECO:0007669"/>
    <property type="project" value="TreeGrafter"/>
</dbReference>
<dbReference type="GO" id="GO:0004853">
    <property type="term" value="F:uroporphyrinogen decarboxylase activity"/>
    <property type="evidence" value="ECO:0007669"/>
    <property type="project" value="UniProtKB-UniRule"/>
</dbReference>
<dbReference type="GO" id="GO:0019353">
    <property type="term" value="P:protoporphyrinogen IX biosynthetic process from glutamate"/>
    <property type="evidence" value="ECO:0007669"/>
    <property type="project" value="TreeGrafter"/>
</dbReference>
<dbReference type="CDD" id="cd00717">
    <property type="entry name" value="URO-D"/>
    <property type="match status" value="1"/>
</dbReference>
<dbReference type="FunFam" id="3.20.20.210:FF:000001">
    <property type="entry name" value="Uroporphyrinogen decarboxylase"/>
    <property type="match status" value="1"/>
</dbReference>
<dbReference type="Gene3D" id="3.20.20.210">
    <property type="match status" value="1"/>
</dbReference>
<dbReference type="HAMAP" id="MF_00218">
    <property type="entry name" value="URO_D"/>
    <property type="match status" value="1"/>
</dbReference>
<dbReference type="InterPro" id="IPR038071">
    <property type="entry name" value="UROD/MetE-like_sf"/>
</dbReference>
<dbReference type="InterPro" id="IPR006361">
    <property type="entry name" value="Uroporphyrinogen_deCO2ase_HemE"/>
</dbReference>
<dbReference type="InterPro" id="IPR000257">
    <property type="entry name" value="Uroporphyrinogen_deCOase"/>
</dbReference>
<dbReference type="NCBIfam" id="TIGR01464">
    <property type="entry name" value="hemE"/>
    <property type="match status" value="1"/>
</dbReference>
<dbReference type="PANTHER" id="PTHR21091">
    <property type="entry name" value="METHYLTETRAHYDROFOLATE:HOMOCYSTEINE METHYLTRANSFERASE RELATED"/>
    <property type="match status" value="1"/>
</dbReference>
<dbReference type="PANTHER" id="PTHR21091:SF169">
    <property type="entry name" value="UROPORPHYRINOGEN DECARBOXYLASE"/>
    <property type="match status" value="1"/>
</dbReference>
<dbReference type="Pfam" id="PF01208">
    <property type="entry name" value="URO-D"/>
    <property type="match status" value="1"/>
</dbReference>
<dbReference type="SUPFAM" id="SSF51726">
    <property type="entry name" value="UROD/MetE-like"/>
    <property type="match status" value="1"/>
</dbReference>
<dbReference type="PROSITE" id="PS00906">
    <property type="entry name" value="UROD_1"/>
    <property type="match status" value="1"/>
</dbReference>
<dbReference type="PROSITE" id="PS00907">
    <property type="entry name" value="UROD_2"/>
    <property type="match status" value="1"/>
</dbReference>
<keyword id="KW-0963">Cytoplasm</keyword>
<keyword id="KW-0210">Decarboxylase</keyword>
<keyword id="KW-0456">Lyase</keyword>
<keyword id="KW-0627">Porphyrin biosynthesis</keyword>
<sequence length="354" mass="39132">MTELKNDRYLRALLRQPVDVTPVWMMRQAGRYLPEYKATRAQAGDFMSLCKNAELACEVTLQPLRRYPLDAAILFSDILTIPDAMGLGLYFEAGEGPRFTAPVTCKADVEKLPIPDPEGELGYVMNAVRTIRRELKGEVPLIGFSGSPWTLATYMVEGGSSKAFTVIKKMMYADPQALHLLLDKLAKSVTLYLNAQIKAGAQSVMIFDTWGGVLTGRDYQQFSLYYMHKIVDGLLRENDGRRVPVTLFTKGGGQWLEAMAETGCDALGLDWTTDIADARRRVGHKVALQGNMDPSMLYAPPARIEDEVATILAGFGQGEGHVFNLGHGIHQDVPPEHAGAFVEAVHRLSAQYHN</sequence>
<comment type="function">
    <text evidence="1">Catalyzes the decarboxylation of four acetate groups of uroporphyrinogen-III to yield coproporphyrinogen-III.</text>
</comment>
<comment type="catalytic activity">
    <reaction evidence="1">
        <text>uroporphyrinogen III + 4 H(+) = coproporphyrinogen III + 4 CO2</text>
        <dbReference type="Rhea" id="RHEA:19865"/>
        <dbReference type="ChEBI" id="CHEBI:15378"/>
        <dbReference type="ChEBI" id="CHEBI:16526"/>
        <dbReference type="ChEBI" id="CHEBI:57308"/>
        <dbReference type="ChEBI" id="CHEBI:57309"/>
        <dbReference type="EC" id="4.1.1.37"/>
    </reaction>
</comment>
<comment type="pathway">
    <text evidence="1">Porphyrin-containing compound metabolism; protoporphyrin-IX biosynthesis; coproporphyrinogen-III from 5-aminolevulinate: step 4/4.</text>
</comment>
<comment type="subunit">
    <text evidence="1">Homodimer.</text>
</comment>
<comment type="subcellular location">
    <subcellularLocation>
        <location evidence="1">Cytoplasm</location>
    </subcellularLocation>
</comment>
<comment type="similarity">
    <text evidence="1">Belongs to the uroporphyrinogen decarboxylase family.</text>
</comment>